<feature type="chain" id="PRO_0000250187" description="Small ribosomal subunit protein uS4y">
    <location>
        <begin position="1"/>
        <end position="197"/>
    </location>
</feature>
<feature type="domain" description="S4 RNA-binding" evidence="1">
    <location>
        <begin position="109"/>
        <end position="183"/>
    </location>
</feature>
<feature type="region of interest" description="Disordered" evidence="2">
    <location>
        <begin position="161"/>
        <end position="197"/>
    </location>
</feature>
<dbReference type="EMBL" id="AB010077">
    <property type="protein sequence ID" value="BAB10209.1"/>
    <property type="molecule type" value="Genomic_DNA"/>
</dbReference>
<dbReference type="EMBL" id="CP002688">
    <property type="protein sequence ID" value="AED94483.1"/>
    <property type="molecule type" value="Genomic_DNA"/>
</dbReference>
<dbReference type="EMBL" id="BT024915">
    <property type="protein sequence ID" value="ABD94071.1"/>
    <property type="molecule type" value="mRNA"/>
</dbReference>
<dbReference type="EMBL" id="AY088109">
    <property type="protein sequence ID" value="AAM65655.1"/>
    <property type="molecule type" value="mRNA"/>
</dbReference>
<dbReference type="RefSeq" id="NP_198801.1">
    <property type="nucleotide sequence ID" value="NM_123348.2"/>
</dbReference>
<dbReference type="SMR" id="Q9FLF0"/>
<dbReference type="BioGRID" id="19232">
    <property type="interactions" value="153"/>
</dbReference>
<dbReference type="FunCoup" id="Q9FLF0">
    <property type="interactions" value="3301"/>
</dbReference>
<dbReference type="IntAct" id="Q9FLF0">
    <property type="interactions" value="1"/>
</dbReference>
<dbReference type="STRING" id="3702.Q9FLF0"/>
<dbReference type="PaxDb" id="3702-AT5G39850.1"/>
<dbReference type="ProteomicsDB" id="226806"/>
<dbReference type="EnsemblPlants" id="AT5G39850.1">
    <property type="protein sequence ID" value="AT5G39850.1"/>
    <property type="gene ID" value="AT5G39850"/>
</dbReference>
<dbReference type="GeneID" id="833981"/>
<dbReference type="Gramene" id="AT5G39850.1">
    <property type="protein sequence ID" value="AT5G39850.1"/>
    <property type="gene ID" value="AT5G39850"/>
</dbReference>
<dbReference type="KEGG" id="ath:AT5G39850"/>
<dbReference type="Araport" id="AT5G39850"/>
<dbReference type="TAIR" id="AT5G39850"/>
<dbReference type="eggNOG" id="KOG3301">
    <property type="taxonomic scope" value="Eukaryota"/>
</dbReference>
<dbReference type="HOGENOM" id="CLU_089738_0_0_1"/>
<dbReference type="InParanoid" id="Q9FLF0"/>
<dbReference type="OMA" id="WIFKNIT"/>
<dbReference type="PhylomeDB" id="Q9FLF0"/>
<dbReference type="PRO" id="PR:Q9FLF0"/>
<dbReference type="Proteomes" id="UP000006548">
    <property type="component" value="Chromosome 5"/>
</dbReference>
<dbReference type="ExpressionAtlas" id="Q9FLF0">
    <property type="expression patterns" value="baseline and differential"/>
</dbReference>
<dbReference type="GO" id="GO:0009506">
    <property type="term" value="C:plasmodesma"/>
    <property type="evidence" value="ECO:0007005"/>
    <property type="project" value="TAIR"/>
</dbReference>
<dbReference type="GO" id="GO:0009536">
    <property type="term" value="C:plastid"/>
    <property type="evidence" value="ECO:0007005"/>
    <property type="project" value="TAIR"/>
</dbReference>
<dbReference type="GO" id="GO:0015935">
    <property type="term" value="C:small ribosomal subunit"/>
    <property type="evidence" value="ECO:0007669"/>
    <property type="project" value="InterPro"/>
</dbReference>
<dbReference type="GO" id="GO:0003729">
    <property type="term" value="F:mRNA binding"/>
    <property type="evidence" value="ECO:0000314"/>
    <property type="project" value="TAIR"/>
</dbReference>
<dbReference type="GO" id="GO:0019843">
    <property type="term" value="F:rRNA binding"/>
    <property type="evidence" value="ECO:0007669"/>
    <property type="project" value="UniProtKB-KW"/>
</dbReference>
<dbReference type="GO" id="GO:0003735">
    <property type="term" value="F:structural constituent of ribosome"/>
    <property type="evidence" value="ECO:0007669"/>
    <property type="project" value="InterPro"/>
</dbReference>
<dbReference type="GO" id="GO:0006412">
    <property type="term" value="P:translation"/>
    <property type="evidence" value="ECO:0007669"/>
    <property type="project" value="InterPro"/>
</dbReference>
<dbReference type="CDD" id="cd00165">
    <property type="entry name" value="S4"/>
    <property type="match status" value="1"/>
</dbReference>
<dbReference type="FunFam" id="3.10.290.10:FF:000021">
    <property type="entry name" value="40S ribosomal protein S9"/>
    <property type="match status" value="1"/>
</dbReference>
<dbReference type="Gene3D" id="3.10.290.10">
    <property type="entry name" value="RNA-binding S4 domain"/>
    <property type="match status" value="1"/>
</dbReference>
<dbReference type="InterPro" id="IPR022801">
    <property type="entry name" value="Ribosomal_uS4"/>
</dbReference>
<dbReference type="InterPro" id="IPR018079">
    <property type="entry name" value="Ribosomal_uS4_CS"/>
</dbReference>
<dbReference type="InterPro" id="IPR005710">
    <property type="entry name" value="Ribosomal_uS4_euk/arc"/>
</dbReference>
<dbReference type="InterPro" id="IPR001912">
    <property type="entry name" value="Ribosomal_uS4_N"/>
</dbReference>
<dbReference type="InterPro" id="IPR002942">
    <property type="entry name" value="S4_RNA-bd"/>
</dbReference>
<dbReference type="InterPro" id="IPR036986">
    <property type="entry name" value="S4_RNA-bd_sf"/>
</dbReference>
<dbReference type="NCBIfam" id="NF003139">
    <property type="entry name" value="PRK04051.1"/>
    <property type="match status" value="1"/>
</dbReference>
<dbReference type="NCBIfam" id="TIGR01018">
    <property type="entry name" value="uS4_arch"/>
    <property type="match status" value="1"/>
</dbReference>
<dbReference type="PANTHER" id="PTHR11831">
    <property type="entry name" value="30S 40S RIBOSOMAL PROTEIN"/>
    <property type="match status" value="1"/>
</dbReference>
<dbReference type="PANTHER" id="PTHR11831:SF47">
    <property type="entry name" value="SMALL RIBOSOMAL SUBUNIT PROTEIN US4Y"/>
    <property type="match status" value="1"/>
</dbReference>
<dbReference type="Pfam" id="PF00163">
    <property type="entry name" value="Ribosomal_S4"/>
    <property type="match status" value="1"/>
</dbReference>
<dbReference type="Pfam" id="PF01479">
    <property type="entry name" value="S4"/>
    <property type="match status" value="1"/>
</dbReference>
<dbReference type="SMART" id="SM01390">
    <property type="entry name" value="Ribosomal_S4"/>
    <property type="match status" value="1"/>
</dbReference>
<dbReference type="SMART" id="SM00363">
    <property type="entry name" value="S4"/>
    <property type="match status" value="1"/>
</dbReference>
<dbReference type="SUPFAM" id="SSF55174">
    <property type="entry name" value="Alpha-L RNA-binding motif"/>
    <property type="match status" value="1"/>
</dbReference>
<dbReference type="PROSITE" id="PS00632">
    <property type="entry name" value="RIBOSOMAL_S4"/>
    <property type="match status" value="1"/>
</dbReference>
<dbReference type="PROSITE" id="PS50889">
    <property type="entry name" value="S4"/>
    <property type="match status" value="1"/>
</dbReference>
<evidence type="ECO:0000255" key="1">
    <source>
        <dbReference type="PROSITE-ProRule" id="PRU00182"/>
    </source>
</evidence>
<evidence type="ECO:0000256" key="2">
    <source>
        <dbReference type="SAM" id="MobiDB-lite"/>
    </source>
</evidence>
<evidence type="ECO:0000269" key="3">
    <source>
    </source>
</evidence>
<evidence type="ECO:0000303" key="4">
    <source>
    </source>
</evidence>
<evidence type="ECO:0000305" key="5"/>
<gene>
    <name type="primary">RPS9C</name>
    <name type="ordered locus">At5g39850</name>
    <name type="ORF">MYH19.1</name>
    <name type="ORF">MYH19.10</name>
</gene>
<keyword id="KW-1185">Reference proteome</keyword>
<keyword id="KW-0687">Ribonucleoprotein</keyword>
<keyword id="KW-0689">Ribosomal protein</keyword>
<keyword id="KW-0694">RNA-binding</keyword>
<keyword id="KW-0699">rRNA-binding</keyword>
<protein>
    <recommendedName>
        <fullName evidence="4">Small ribosomal subunit protein uS4y</fullName>
    </recommendedName>
    <alternativeName>
        <fullName>40S ribosomal protein S9-2</fullName>
    </alternativeName>
</protein>
<sequence>MVNVRFYRNYGKTFKKPRRPYEKERLDAELKLVGEYGLRCKRELWRVQYTLSRIRNAARELLTLDEKNPRRIFEGEALLRRMNRYGLLDETQNKLDYVLALTVENFLERRLQTIVFKSGMAKSIHHARVLIRQRHIRVGRQLVNIPSFMVRVESQKHVDFSLTSPFGGGRPGRVKRRNERAGAKKASGGDGDEDDEE</sequence>
<comment type="subunit">
    <text evidence="3">Binds to the translation initiation factors TIF3E1.</text>
</comment>
<comment type="similarity">
    <text evidence="5">Belongs to the universal ribosomal protein uS4 family.</text>
</comment>
<organism>
    <name type="scientific">Arabidopsis thaliana</name>
    <name type="common">Mouse-ear cress</name>
    <dbReference type="NCBI Taxonomy" id="3702"/>
    <lineage>
        <taxon>Eukaryota</taxon>
        <taxon>Viridiplantae</taxon>
        <taxon>Streptophyta</taxon>
        <taxon>Embryophyta</taxon>
        <taxon>Tracheophyta</taxon>
        <taxon>Spermatophyta</taxon>
        <taxon>Magnoliopsida</taxon>
        <taxon>eudicotyledons</taxon>
        <taxon>Gunneridae</taxon>
        <taxon>Pentapetalae</taxon>
        <taxon>rosids</taxon>
        <taxon>malvids</taxon>
        <taxon>Brassicales</taxon>
        <taxon>Brassicaceae</taxon>
        <taxon>Camelineae</taxon>
        <taxon>Arabidopsis</taxon>
    </lineage>
</organism>
<proteinExistence type="evidence at protein level"/>
<name>RS92_ARATH</name>
<reference key="1">
    <citation type="journal article" date="1998" name="DNA Res.">
        <title>Structural analysis of Arabidopsis thaliana chromosome 5. IV. Sequence features of the regions of 1,456,315 bp covered by nineteen physically assigned P1 and TAC clones.</title>
        <authorList>
            <person name="Sato S."/>
            <person name="Kaneko T."/>
            <person name="Kotani H."/>
            <person name="Nakamura Y."/>
            <person name="Asamizu E."/>
            <person name="Miyajima N."/>
            <person name="Tabata S."/>
        </authorList>
    </citation>
    <scope>NUCLEOTIDE SEQUENCE [LARGE SCALE GENOMIC DNA]</scope>
    <source>
        <strain>cv. Columbia</strain>
    </source>
</reference>
<reference key="2">
    <citation type="journal article" date="2017" name="Plant J.">
        <title>Araport11: a complete reannotation of the Arabidopsis thaliana reference genome.</title>
        <authorList>
            <person name="Cheng C.Y."/>
            <person name="Krishnakumar V."/>
            <person name="Chan A.P."/>
            <person name="Thibaud-Nissen F."/>
            <person name="Schobel S."/>
            <person name="Town C.D."/>
        </authorList>
    </citation>
    <scope>GENOME REANNOTATION</scope>
    <source>
        <strain>cv. Columbia</strain>
    </source>
</reference>
<reference key="3">
    <citation type="submission" date="2006-03" db="EMBL/GenBank/DDBJ databases">
        <title>Arabidopsis ORF clones.</title>
        <authorList>
            <person name="Shinn P."/>
            <person name="Chen H."/>
            <person name="Kim C.J."/>
            <person name="Ecker J.R."/>
        </authorList>
    </citation>
    <scope>NUCLEOTIDE SEQUENCE [LARGE SCALE MRNA]</scope>
    <source>
        <strain>cv. Columbia</strain>
    </source>
</reference>
<reference key="4">
    <citation type="submission" date="2002-03" db="EMBL/GenBank/DDBJ databases">
        <title>Full-length cDNA from Arabidopsis thaliana.</title>
        <authorList>
            <person name="Brover V.V."/>
            <person name="Troukhan M.E."/>
            <person name="Alexandrov N.A."/>
            <person name="Lu Y.-P."/>
            <person name="Flavell R.B."/>
            <person name="Feldmann K.A."/>
        </authorList>
    </citation>
    <scope>NUCLEOTIDE SEQUENCE [LARGE SCALE MRNA]</scope>
</reference>
<reference key="5">
    <citation type="journal article" date="2001" name="Plant Physiol.">
        <title>The organization of cytoplasmic ribosomal protein genes in the Arabidopsis genome.</title>
        <authorList>
            <person name="Barakat A."/>
            <person name="Szick-Miranda K."/>
            <person name="Chang I.-F."/>
            <person name="Guyot R."/>
            <person name="Blanc G."/>
            <person name="Cooke R."/>
            <person name="Delseny M."/>
            <person name="Bailey-Serres J."/>
        </authorList>
    </citation>
    <scope>GENE FAMILY ORGANIZATION</scope>
    <scope>NOMENCLATURE</scope>
</reference>
<reference key="6">
    <citation type="journal article" date="2008" name="Plant Signal. Behav.">
        <title>Arabidopsis eIF3e interacts with subunits of the ribosome, Cop9 signalosome and proteasome.</title>
        <authorList>
            <person name="Paz-Aviram T."/>
            <person name="Yahalom A."/>
            <person name="Chamovitz D.A."/>
        </authorList>
    </citation>
    <scope>INTERACTION WITH TIF3E1</scope>
</reference>
<reference key="7">
    <citation type="journal article" date="2023" name="Plant Cell">
        <title>An updated nomenclature for plant ribosomal protein genes.</title>
        <authorList>
            <person name="Scarpin M.R."/>
            <person name="Busche M."/>
            <person name="Martinez R.E."/>
            <person name="Harper L.C."/>
            <person name="Reiser L."/>
            <person name="Szakonyi D."/>
            <person name="Merchante C."/>
            <person name="Lan T."/>
            <person name="Xiong W."/>
            <person name="Mo B."/>
            <person name="Tang G."/>
            <person name="Chen X."/>
            <person name="Bailey-Serres J."/>
            <person name="Browning K.S."/>
            <person name="Brunkard J.O."/>
        </authorList>
    </citation>
    <scope>NOMENCLATURE</scope>
</reference>
<accession>Q9FLF0</accession>